<comment type="function">
    <text>May function in depolymerizing pectin during pollen development, germination, and tube growth. Acts as an exo-polygalacturonase.</text>
</comment>
<comment type="catalytic activity">
    <reaction>
        <text>[(1-&gt;4)-alpha-D-galacturonosyl](n) + H2O = alpha-D-galacturonate + [(1-&gt;4)-alpha-D-galacturonosyl](n-1)</text>
        <dbReference type="Rhea" id="RHEA:14117"/>
        <dbReference type="Rhea" id="RHEA-COMP:14570"/>
        <dbReference type="Rhea" id="RHEA-COMP:14572"/>
        <dbReference type="ChEBI" id="CHEBI:15377"/>
        <dbReference type="ChEBI" id="CHEBI:58658"/>
        <dbReference type="ChEBI" id="CHEBI:140523"/>
        <dbReference type="EC" id="3.2.1.67"/>
    </reaction>
</comment>
<comment type="subcellular location">
    <subcellularLocation>
        <location evidence="1">Secreted</location>
    </subcellularLocation>
    <subcellularLocation>
        <location evidence="1">Secreted</location>
        <location evidence="1">Cell wall</location>
    </subcellularLocation>
</comment>
<comment type="tissue specificity">
    <text>Pollen tubes growing through the style during pollination.</text>
</comment>
<comment type="developmental stage">
    <text>Accumulates late in pollen development and/or during germination and tube growth.</text>
</comment>
<comment type="similarity">
    <text evidence="4">Belongs to the glycosyl hydrolase 28 family.</text>
</comment>
<protein>
    <recommendedName>
        <fullName>Exopolygalacturonase</fullName>
        <shortName>ExoPG</shortName>
        <ecNumber>3.2.1.67</ecNumber>
    </recommendedName>
    <alternativeName>
        <fullName>Galacturan 1,4-alpha-galacturonidase</fullName>
    </alternativeName>
    <alternativeName>
        <fullName>Pectinase</fullName>
    </alternativeName>
</protein>
<evidence type="ECO:0000250" key="1"/>
<evidence type="ECO:0000255" key="2"/>
<evidence type="ECO:0000255" key="3">
    <source>
        <dbReference type="PROSITE-ProRule" id="PRU10052"/>
    </source>
</evidence>
<evidence type="ECO:0000305" key="4"/>
<keyword id="KW-0134">Cell wall</keyword>
<keyword id="KW-0961">Cell wall biogenesis/degradation</keyword>
<keyword id="KW-0325">Glycoprotein</keyword>
<keyword id="KW-0326">Glycosidase</keyword>
<keyword id="KW-0378">Hydrolase</keyword>
<keyword id="KW-0677">Repeat</keyword>
<keyword id="KW-0964">Secreted</keyword>
<proteinExistence type="evidence at transcript level"/>
<accession>P24548</accession>
<reference key="1">
    <citation type="journal article" date="1990" name="Plant Cell">
        <title>Characterization of a gene family abundantly expressed in Oenothera organensis pollen that shows sequence similarity to polygalacturonase.</title>
        <authorList>
            <person name="Brown S.M."/>
            <person name="Crouch M.L."/>
        </authorList>
    </citation>
    <scope>NUCLEOTIDE SEQUENCE</scope>
    <source>
        <tissue>Pollen</tissue>
    </source>
</reference>
<dbReference type="EC" id="3.2.1.67"/>
<dbReference type="PIR" id="JQ0992">
    <property type="entry name" value="JQ0992"/>
</dbReference>
<dbReference type="SMR" id="P24548"/>
<dbReference type="CAZy" id="GH28">
    <property type="family name" value="Glycoside Hydrolase Family 28"/>
</dbReference>
<dbReference type="GO" id="GO:0005576">
    <property type="term" value="C:extracellular region"/>
    <property type="evidence" value="ECO:0007669"/>
    <property type="project" value="UniProtKB-SubCell"/>
</dbReference>
<dbReference type="GO" id="GO:0047911">
    <property type="term" value="F:galacturan 1,4-alpha-galacturonidase activity"/>
    <property type="evidence" value="ECO:0007669"/>
    <property type="project" value="UniProtKB-EC"/>
</dbReference>
<dbReference type="GO" id="GO:0004650">
    <property type="term" value="F:polygalacturonase activity"/>
    <property type="evidence" value="ECO:0007669"/>
    <property type="project" value="InterPro"/>
</dbReference>
<dbReference type="GO" id="GO:0005975">
    <property type="term" value="P:carbohydrate metabolic process"/>
    <property type="evidence" value="ECO:0007669"/>
    <property type="project" value="InterPro"/>
</dbReference>
<dbReference type="GO" id="GO:0071555">
    <property type="term" value="P:cell wall organization"/>
    <property type="evidence" value="ECO:0007669"/>
    <property type="project" value="UniProtKB-KW"/>
</dbReference>
<dbReference type="FunFam" id="2.160.20.10:FF:000004">
    <property type="entry name" value="Pectin lyase-like superfamily protein"/>
    <property type="match status" value="1"/>
</dbReference>
<dbReference type="Gene3D" id="2.160.20.10">
    <property type="entry name" value="Single-stranded right-handed beta-helix, Pectin lyase-like"/>
    <property type="match status" value="1"/>
</dbReference>
<dbReference type="InterPro" id="IPR000743">
    <property type="entry name" value="Glyco_hydro_28"/>
</dbReference>
<dbReference type="InterPro" id="IPR006626">
    <property type="entry name" value="PbH1"/>
</dbReference>
<dbReference type="InterPro" id="IPR012334">
    <property type="entry name" value="Pectin_lyas_fold"/>
</dbReference>
<dbReference type="InterPro" id="IPR011050">
    <property type="entry name" value="Pectin_lyase_fold/virulence"/>
</dbReference>
<dbReference type="PANTHER" id="PTHR31375">
    <property type="match status" value="1"/>
</dbReference>
<dbReference type="Pfam" id="PF00295">
    <property type="entry name" value="Glyco_hydro_28"/>
    <property type="match status" value="1"/>
</dbReference>
<dbReference type="SMART" id="SM00710">
    <property type="entry name" value="PbH1"/>
    <property type="match status" value="4"/>
</dbReference>
<dbReference type="SUPFAM" id="SSF51126">
    <property type="entry name" value="Pectin lyase-like"/>
    <property type="match status" value="1"/>
</dbReference>
<dbReference type="PROSITE" id="PS00502">
    <property type="entry name" value="POLYGALACTURONASE"/>
    <property type="match status" value="1"/>
</dbReference>
<sequence length="362" mass="38207">DSTQALTTAWKEACASASPSTILVPKGNFAVGLITLEGPCKSSIGLQLQGTLKAPADPSKIKGLGWINLNKIDLLTIFGGGVFDGQGKSAWVQNDCHKNGPICKTLSMNLRLYAVTNSILRDVTTLDSKNFHVNVIGCKNLTFERFKISAAETSINTDGIHIGRSDGVNIINTEIKTGDDCISLGDGSKNINITNITCGPGHGISVGSLGRYKNEESVVGIYVKNCTITGSQNGVRIKTWPKSEPGEASEMHFQDITMNSVGTPILIDQGYCPYNQCTAEVPSSVKLSKISFKNIKGTSTTKEAVKLVCSKSFPCNGVELADIDLTYSGKGGPATSVCENIKPTIKGKQIPAICSGSAAKAA</sequence>
<feature type="chain" id="PRO_0000215229" description="Exopolygalacturonase">
    <location>
        <begin position="1" status="less than"/>
        <end position="362"/>
    </location>
</feature>
<feature type="repeat" description="PbH1 1">
    <location>
        <begin position="138"/>
        <end position="164"/>
    </location>
</feature>
<feature type="repeat" description="PbH1 2">
    <location>
        <begin position="165"/>
        <end position="186"/>
    </location>
</feature>
<feature type="repeat" description="PbH1 3">
    <location>
        <begin position="188"/>
        <end position="208"/>
    </location>
</feature>
<feature type="repeat" description="PbH1 4">
    <location>
        <begin position="218"/>
        <end position="239"/>
    </location>
</feature>
<feature type="active site" description="Proton donor" evidence="3">
    <location>
        <position position="179"/>
    </location>
</feature>
<feature type="active site" evidence="3">
    <location>
        <position position="202"/>
    </location>
</feature>
<feature type="glycosylation site" description="N-linked (GlcNAc...) asparagine" evidence="2">
    <location>
        <position position="140"/>
    </location>
</feature>
<feature type="glycosylation site" description="N-linked (GlcNAc...) asparagine" evidence="2">
    <location>
        <position position="192"/>
    </location>
</feature>
<feature type="glycosylation site" description="N-linked (GlcNAc...) asparagine" evidence="2">
    <location>
        <position position="195"/>
    </location>
</feature>
<feature type="glycosylation site" description="N-linked (GlcNAc...) asparagine" evidence="2">
    <location>
        <position position="225"/>
    </location>
</feature>
<feature type="non-terminal residue">
    <location>
        <position position="1"/>
    </location>
</feature>
<organism>
    <name type="scientific">Oenothera organensis</name>
    <name type="common">Evening primrose</name>
    <dbReference type="NCBI Taxonomy" id="3945"/>
    <lineage>
        <taxon>Eukaryota</taxon>
        <taxon>Viridiplantae</taxon>
        <taxon>Streptophyta</taxon>
        <taxon>Embryophyta</taxon>
        <taxon>Tracheophyta</taxon>
        <taxon>Spermatophyta</taxon>
        <taxon>Magnoliopsida</taxon>
        <taxon>eudicotyledons</taxon>
        <taxon>Gunneridae</taxon>
        <taxon>Pentapetalae</taxon>
        <taxon>rosids</taxon>
        <taxon>malvids</taxon>
        <taxon>Myrtales</taxon>
        <taxon>Onagraceae</taxon>
        <taxon>Onagroideae</taxon>
        <taxon>Onagreae</taxon>
        <taxon>Oenothera</taxon>
    </lineage>
</organism>
<name>PGLR_OENOR</name>